<organism>
    <name type="scientific">Desulforudis audaxviator (strain MP104C)</name>
    <dbReference type="NCBI Taxonomy" id="477974"/>
    <lineage>
        <taxon>Bacteria</taxon>
        <taxon>Bacillati</taxon>
        <taxon>Bacillota</taxon>
        <taxon>Clostridia</taxon>
        <taxon>Thermoanaerobacterales</taxon>
        <taxon>Candidatus Desulforudaceae</taxon>
        <taxon>Candidatus Desulforudis</taxon>
    </lineage>
</organism>
<proteinExistence type="inferred from homology"/>
<keyword id="KW-0963">Cytoplasm</keyword>
<keyword id="KW-0275">Fatty acid biosynthesis</keyword>
<keyword id="KW-0276">Fatty acid metabolism</keyword>
<keyword id="KW-0444">Lipid biosynthesis</keyword>
<keyword id="KW-0443">Lipid metabolism</keyword>
<keyword id="KW-0460">Magnesium</keyword>
<keyword id="KW-0479">Metal-binding</keyword>
<keyword id="KW-1185">Reference proteome</keyword>
<keyword id="KW-0808">Transferase</keyword>
<name>ACPS_DESAP</name>
<evidence type="ECO:0000255" key="1">
    <source>
        <dbReference type="HAMAP-Rule" id="MF_00101"/>
    </source>
</evidence>
<gene>
    <name evidence="1" type="primary">acpS</name>
    <name type="ordered locus">Daud_0470</name>
</gene>
<dbReference type="EC" id="2.7.8.7" evidence="1"/>
<dbReference type="EMBL" id="CP000860">
    <property type="protein sequence ID" value="ACA59016.1"/>
    <property type="molecule type" value="Genomic_DNA"/>
</dbReference>
<dbReference type="SMR" id="B1I1U5"/>
<dbReference type="STRING" id="477974.Daud_0470"/>
<dbReference type="KEGG" id="dau:Daud_0470"/>
<dbReference type="eggNOG" id="COG0736">
    <property type="taxonomic scope" value="Bacteria"/>
</dbReference>
<dbReference type="HOGENOM" id="CLU_089696_0_2_9"/>
<dbReference type="OrthoDB" id="517356at2"/>
<dbReference type="Proteomes" id="UP000008544">
    <property type="component" value="Chromosome"/>
</dbReference>
<dbReference type="GO" id="GO:0005737">
    <property type="term" value="C:cytoplasm"/>
    <property type="evidence" value="ECO:0007669"/>
    <property type="project" value="UniProtKB-SubCell"/>
</dbReference>
<dbReference type="GO" id="GO:0008897">
    <property type="term" value="F:holo-[acyl-carrier-protein] synthase activity"/>
    <property type="evidence" value="ECO:0007669"/>
    <property type="project" value="UniProtKB-UniRule"/>
</dbReference>
<dbReference type="GO" id="GO:0000287">
    <property type="term" value="F:magnesium ion binding"/>
    <property type="evidence" value="ECO:0007669"/>
    <property type="project" value="UniProtKB-UniRule"/>
</dbReference>
<dbReference type="GO" id="GO:0006633">
    <property type="term" value="P:fatty acid biosynthetic process"/>
    <property type="evidence" value="ECO:0007669"/>
    <property type="project" value="UniProtKB-UniRule"/>
</dbReference>
<dbReference type="Gene3D" id="3.90.470.20">
    <property type="entry name" value="4'-phosphopantetheinyl transferase domain"/>
    <property type="match status" value="1"/>
</dbReference>
<dbReference type="HAMAP" id="MF_00101">
    <property type="entry name" value="AcpS"/>
    <property type="match status" value="1"/>
</dbReference>
<dbReference type="InterPro" id="IPR008278">
    <property type="entry name" value="4-PPantetheinyl_Trfase_dom"/>
</dbReference>
<dbReference type="InterPro" id="IPR037143">
    <property type="entry name" value="4-PPantetheinyl_Trfase_dom_sf"/>
</dbReference>
<dbReference type="InterPro" id="IPR002582">
    <property type="entry name" value="ACPS"/>
</dbReference>
<dbReference type="InterPro" id="IPR004568">
    <property type="entry name" value="Ppantetheine-prot_Trfase_dom"/>
</dbReference>
<dbReference type="NCBIfam" id="TIGR00516">
    <property type="entry name" value="acpS"/>
    <property type="match status" value="1"/>
</dbReference>
<dbReference type="NCBIfam" id="TIGR00556">
    <property type="entry name" value="pantethn_trn"/>
    <property type="match status" value="1"/>
</dbReference>
<dbReference type="NCBIfam" id="NF000832">
    <property type="entry name" value="PRK00070.3-2"/>
    <property type="match status" value="1"/>
</dbReference>
<dbReference type="Pfam" id="PF01648">
    <property type="entry name" value="ACPS"/>
    <property type="match status" value="1"/>
</dbReference>
<dbReference type="SUPFAM" id="SSF56214">
    <property type="entry name" value="4'-phosphopantetheinyl transferase"/>
    <property type="match status" value="1"/>
</dbReference>
<reference key="1">
    <citation type="submission" date="2007-10" db="EMBL/GenBank/DDBJ databases">
        <title>Complete sequence of chromosome of Desulforudis audaxviator MP104C.</title>
        <authorList>
            <person name="Copeland A."/>
            <person name="Lucas S."/>
            <person name="Lapidus A."/>
            <person name="Barry K."/>
            <person name="Glavina del Rio T."/>
            <person name="Dalin E."/>
            <person name="Tice H."/>
            <person name="Bruce D."/>
            <person name="Pitluck S."/>
            <person name="Lowry S.R."/>
            <person name="Larimer F."/>
            <person name="Land M.L."/>
            <person name="Hauser L."/>
            <person name="Kyrpides N."/>
            <person name="Ivanova N.N."/>
            <person name="Richardson P."/>
        </authorList>
    </citation>
    <scope>NUCLEOTIDE SEQUENCE [LARGE SCALE GENOMIC DNA]</scope>
    <source>
        <strain>MP104C</strain>
    </source>
</reference>
<sequence>MILGIGVDLVSVKRIRSASERTGGRLLVRLFTPAERDCCRARRAAYECYAARFAAKEAVFKALGTGFSGCCWHDVEITNGPGGGPVVALTGSAARVAARRGITGVLLSLSHEGDQAVAFAIAVGPSESQRK</sequence>
<comment type="function">
    <text evidence="1">Transfers the 4'-phosphopantetheine moiety from coenzyme A to a Ser of acyl-carrier-protein.</text>
</comment>
<comment type="catalytic activity">
    <reaction evidence="1">
        <text>apo-[ACP] + CoA = holo-[ACP] + adenosine 3',5'-bisphosphate + H(+)</text>
        <dbReference type="Rhea" id="RHEA:12068"/>
        <dbReference type="Rhea" id="RHEA-COMP:9685"/>
        <dbReference type="Rhea" id="RHEA-COMP:9690"/>
        <dbReference type="ChEBI" id="CHEBI:15378"/>
        <dbReference type="ChEBI" id="CHEBI:29999"/>
        <dbReference type="ChEBI" id="CHEBI:57287"/>
        <dbReference type="ChEBI" id="CHEBI:58343"/>
        <dbReference type="ChEBI" id="CHEBI:64479"/>
        <dbReference type="EC" id="2.7.8.7"/>
    </reaction>
</comment>
<comment type="cofactor">
    <cofactor evidence="1">
        <name>Mg(2+)</name>
        <dbReference type="ChEBI" id="CHEBI:18420"/>
    </cofactor>
</comment>
<comment type="subcellular location">
    <subcellularLocation>
        <location evidence="1">Cytoplasm</location>
    </subcellularLocation>
</comment>
<comment type="similarity">
    <text evidence="1">Belongs to the P-Pant transferase superfamily. AcpS family.</text>
</comment>
<protein>
    <recommendedName>
        <fullName evidence="1">Holo-[acyl-carrier-protein] synthase</fullName>
        <shortName evidence="1">Holo-ACP synthase</shortName>
        <ecNumber evidence="1">2.7.8.7</ecNumber>
    </recommendedName>
    <alternativeName>
        <fullName evidence="1">4'-phosphopantetheinyl transferase AcpS</fullName>
    </alternativeName>
</protein>
<feature type="chain" id="PRO_1000117346" description="Holo-[acyl-carrier-protein] synthase">
    <location>
        <begin position="1"/>
        <end position="131"/>
    </location>
</feature>
<feature type="binding site" evidence="1">
    <location>
        <position position="8"/>
    </location>
    <ligand>
        <name>Mg(2+)</name>
        <dbReference type="ChEBI" id="CHEBI:18420"/>
    </ligand>
</feature>
<feature type="binding site" evidence="1">
    <location>
        <position position="57"/>
    </location>
    <ligand>
        <name>Mg(2+)</name>
        <dbReference type="ChEBI" id="CHEBI:18420"/>
    </ligand>
</feature>
<accession>B1I1U5</accession>